<accession>P0C9N7</accession>
<organismHost>
    <name type="scientific">Ornithodoros</name>
    <name type="common">relapsing fever ticks</name>
    <dbReference type="NCBI Taxonomy" id="6937"/>
</organismHost>
<organismHost>
    <name type="scientific">Phacochoerus aethiopicus</name>
    <name type="common">Warthog</name>
    <dbReference type="NCBI Taxonomy" id="85517"/>
</organismHost>
<organismHost>
    <name type="scientific">Phacochoerus africanus</name>
    <name type="common">Warthog</name>
    <dbReference type="NCBI Taxonomy" id="41426"/>
</organismHost>
<organismHost>
    <name type="scientific">Potamochoerus larvatus</name>
    <name type="common">Bushpig</name>
    <dbReference type="NCBI Taxonomy" id="273792"/>
</organismHost>
<organismHost>
    <name type="scientific">Sus scrofa</name>
    <name type="common">Pig</name>
    <dbReference type="NCBI Taxonomy" id="9823"/>
</organismHost>
<evidence type="ECO:0000250" key="1">
    <source>
        <dbReference type="UniProtKB" id="P23162"/>
    </source>
</evidence>
<evidence type="ECO:0000305" key="2"/>
<proteinExistence type="inferred from homology"/>
<organism>
    <name type="scientific">African swine fever virus (isolate Pig/Kenya/KEN-50/1950)</name>
    <name type="common">ASFV</name>
    <dbReference type="NCBI Taxonomy" id="561445"/>
    <lineage>
        <taxon>Viruses</taxon>
        <taxon>Varidnaviria</taxon>
        <taxon>Bamfordvirae</taxon>
        <taxon>Nucleocytoviricota</taxon>
        <taxon>Pokkesviricetes</taxon>
        <taxon>Asfuvirales</taxon>
        <taxon>Asfarviridae</taxon>
        <taxon>Asfivirus</taxon>
        <taxon>African swine fever virus</taxon>
    </lineage>
</organism>
<reference key="1">
    <citation type="submission" date="2003-03" db="EMBL/GenBank/DDBJ databases">
        <title>African swine fever virus genomes.</title>
        <authorList>
            <person name="Kutish G.F."/>
            <person name="Rock D.L."/>
        </authorList>
    </citation>
    <scope>NUCLEOTIDE SEQUENCE [LARGE SCALE GENOMIC DNA]</scope>
</reference>
<comment type="function">
    <text evidence="1">Plays a role in virus cell tropism, and may be required for efficient virus replication in macrophages.</text>
</comment>
<comment type="induction">
    <text evidence="2">Expressed in the early phase of the viral replicative cycle.</text>
</comment>
<comment type="similarity">
    <text evidence="2">Belongs to the asfivirus MGF 360 family.</text>
</comment>
<feature type="chain" id="PRO_0000373264" description="Protein MGF 360-8L">
    <location>
        <begin position="1"/>
        <end position="319"/>
    </location>
</feature>
<sequence>MLSLQTLAKKALAKQSVPEEYHYILKYCGLWWQNKPIHLCDYCNYVIVNSTPFKGELHLDVALIMAIKENNHDLIRLFTEWGANIYYGLSCARTEYTQELCRKLGAKDGLDKKDIFISLLHHKTSNNIILCHEIFNKNPMLEILNMQDFGEEIHRELKHLIFYILDNVPINTLNKYWYAIAVKYKLKRAISFFYQTYDHLNMWRLMCAISFNNVFDLHEIYEQKIVHMDIDKMMHLACMEDDNFLTIYYCFVLGADIDQAINVTLWHHQTNNLCFCKDLKDLKEQNGLTARPLLLPNITDPKKIYTMLKNYLPISSNSR</sequence>
<protein>
    <recommendedName>
        <fullName>Protein MGF 360-8L</fullName>
    </recommendedName>
</protein>
<gene>
    <name type="ordered locus">Ken-031</name>
</gene>
<dbReference type="EMBL" id="AY261360">
    <property type="status" value="NOT_ANNOTATED_CDS"/>
    <property type="molecule type" value="Genomic_DNA"/>
</dbReference>
<dbReference type="SMR" id="P0C9N7"/>
<dbReference type="Proteomes" id="UP000000861">
    <property type="component" value="Segment"/>
</dbReference>
<dbReference type="GO" id="GO:0042330">
    <property type="term" value="P:taxis"/>
    <property type="evidence" value="ECO:0007669"/>
    <property type="project" value="InterPro"/>
</dbReference>
<dbReference type="InterPro" id="IPR002595">
    <property type="entry name" value="ASFV_MGF360"/>
</dbReference>
<dbReference type="Pfam" id="PF01671">
    <property type="entry name" value="ASFV_360"/>
    <property type="match status" value="1"/>
</dbReference>
<keyword id="KW-0244">Early protein</keyword>
<name>3608L_ASFK5</name>